<sequence>MRPMTIDIDELAFALDTPGIDHYLDLYSGKVLLISAEAPDPELDALLENEPERLLLIDPLSTTQSLGLMQDFLREVEEPHAYATLANALQSRKPFKAFKHSLMEYPELLQDWYRYQNERLREWALDWLEDNDIQPAARQSPTSLLPPPGKPFA</sequence>
<accession>Q9HUB0</accession>
<keyword id="KW-1185">Reference proteome</keyword>
<name>Y5073_PSEAE</name>
<comment type="similarity">
    <text evidence="1">Belongs to the UPF0158 family.</text>
</comment>
<evidence type="ECO:0000305" key="1"/>
<proteinExistence type="inferred from homology"/>
<organism>
    <name type="scientific">Pseudomonas aeruginosa (strain ATCC 15692 / DSM 22644 / CIP 104116 / JCM 14847 / LMG 12228 / 1C / PRS 101 / PAO1)</name>
    <dbReference type="NCBI Taxonomy" id="208964"/>
    <lineage>
        <taxon>Bacteria</taxon>
        <taxon>Pseudomonadati</taxon>
        <taxon>Pseudomonadota</taxon>
        <taxon>Gammaproteobacteria</taxon>
        <taxon>Pseudomonadales</taxon>
        <taxon>Pseudomonadaceae</taxon>
        <taxon>Pseudomonas</taxon>
    </lineage>
</organism>
<gene>
    <name type="ordered locus">PA5073</name>
</gene>
<dbReference type="EMBL" id="AE004091">
    <property type="protein sequence ID" value="AAG08458.1"/>
    <property type="molecule type" value="Genomic_DNA"/>
</dbReference>
<dbReference type="PIR" id="D83012">
    <property type="entry name" value="D83012"/>
</dbReference>
<dbReference type="RefSeq" id="NP_253760.1">
    <property type="nucleotide sequence ID" value="NC_002516.2"/>
</dbReference>
<dbReference type="RefSeq" id="WP_003095904.1">
    <property type="nucleotide sequence ID" value="NZ_QZGE01000002.1"/>
</dbReference>
<dbReference type="STRING" id="208964.PA5073"/>
<dbReference type="PaxDb" id="208964-PA5073"/>
<dbReference type="GeneID" id="881152"/>
<dbReference type="KEGG" id="pae:PA5073"/>
<dbReference type="PATRIC" id="fig|208964.12.peg.5318"/>
<dbReference type="PseudoCAP" id="PA5073"/>
<dbReference type="HOGENOM" id="CLU_137359_0_0_6"/>
<dbReference type="InParanoid" id="Q9HUB0"/>
<dbReference type="OrthoDB" id="6885232at2"/>
<dbReference type="BioCyc" id="PAER208964:G1FZ6-5189-MONOMER"/>
<dbReference type="Proteomes" id="UP000002438">
    <property type="component" value="Chromosome"/>
</dbReference>
<dbReference type="InterPro" id="IPR005361">
    <property type="entry name" value="UPF0158"/>
</dbReference>
<dbReference type="Pfam" id="PF03682">
    <property type="entry name" value="UPF0158"/>
    <property type="match status" value="1"/>
</dbReference>
<protein>
    <recommendedName>
        <fullName>UPF0158 protein PA5073</fullName>
    </recommendedName>
</protein>
<feature type="chain" id="PRO_0000220649" description="UPF0158 protein PA5073">
    <location>
        <begin position="1"/>
        <end position="153"/>
    </location>
</feature>
<reference key="1">
    <citation type="journal article" date="2000" name="Nature">
        <title>Complete genome sequence of Pseudomonas aeruginosa PAO1, an opportunistic pathogen.</title>
        <authorList>
            <person name="Stover C.K."/>
            <person name="Pham X.-Q.T."/>
            <person name="Erwin A.L."/>
            <person name="Mizoguchi S.D."/>
            <person name="Warrener P."/>
            <person name="Hickey M.J."/>
            <person name="Brinkman F.S.L."/>
            <person name="Hufnagle W.O."/>
            <person name="Kowalik D.J."/>
            <person name="Lagrou M."/>
            <person name="Garber R.L."/>
            <person name="Goltry L."/>
            <person name="Tolentino E."/>
            <person name="Westbrock-Wadman S."/>
            <person name="Yuan Y."/>
            <person name="Brody L.L."/>
            <person name="Coulter S.N."/>
            <person name="Folger K.R."/>
            <person name="Kas A."/>
            <person name="Larbig K."/>
            <person name="Lim R.M."/>
            <person name="Smith K.A."/>
            <person name="Spencer D.H."/>
            <person name="Wong G.K.-S."/>
            <person name="Wu Z."/>
            <person name="Paulsen I.T."/>
            <person name="Reizer J."/>
            <person name="Saier M.H. Jr."/>
            <person name="Hancock R.E.W."/>
            <person name="Lory S."/>
            <person name="Olson M.V."/>
        </authorList>
    </citation>
    <scope>NUCLEOTIDE SEQUENCE [LARGE SCALE GENOMIC DNA]</scope>
    <source>
        <strain>ATCC 15692 / DSM 22644 / CIP 104116 / JCM 14847 / LMG 12228 / 1C / PRS 101 / PAO1</strain>
    </source>
</reference>